<organism>
    <name type="scientific">Linum usitatissimum</name>
    <name type="common">Flax</name>
    <name type="synonym">Linum humile</name>
    <dbReference type="NCBI Taxonomy" id="4006"/>
    <lineage>
        <taxon>Eukaryota</taxon>
        <taxon>Viridiplantae</taxon>
        <taxon>Streptophyta</taxon>
        <taxon>Embryophyta</taxon>
        <taxon>Tracheophyta</taxon>
        <taxon>Spermatophyta</taxon>
        <taxon>Magnoliopsida</taxon>
        <taxon>eudicotyledons</taxon>
        <taxon>Gunneridae</taxon>
        <taxon>Pentapetalae</taxon>
        <taxon>rosids</taxon>
        <taxon>fabids</taxon>
        <taxon>Malpighiales</taxon>
        <taxon>Linaceae</taxon>
        <taxon>Linum</taxon>
    </lineage>
</organism>
<gene>
    <name evidence="9" type="primary">L6</name>
</gene>
<name>L6_LINUS</name>
<accession>Q40253</accession>
<evidence type="ECO:0000250" key="1">
    <source>
        <dbReference type="UniProtKB" id="V9M398"/>
    </source>
</evidence>
<evidence type="ECO:0000255" key="2"/>
<evidence type="ECO:0000255" key="3">
    <source>
        <dbReference type="PROSITE-ProRule" id="PRU00204"/>
    </source>
</evidence>
<evidence type="ECO:0000256" key="4">
    <source>
        <dbReference type="SAM" id="MobiDB-lite"/>
    </source>
</evidence>
<evidence type="ECO:0000269" key="5">
    <source>
    </source>
</evidence>
<evidence type="ECO:0000269" key="6">
    <source>
    </source>
</evidence>
<evidence type="ECO:0000269" key="7">
    <source>
    </source>
</evidence>
<evidence type="ECO:0000269" key="8">
    <source>
    </source>
</evidence>
<evidence type="ECO:0000303" key="9">
    <source>
    </source>
</evidence>
<evidence type="ECO:0000305" key="10"/>
<evidence type="ECO:0000305" key="11">
    <source>
    </source>
</evidence>
<evidence type="ECO:0000305" key="12">
    <source>
    </source>
</evidence>
<evidence type="ECO:0007744" key="13">
    <source>
        <dbReference type="PDB" id="3OZI"/>
    </source>
</evidence>
<proteinExistence type="evidence at protein level"/>
<protein>
    <recommendedName>
        <fullName evidence="10">Disease resistance protein L6</fullName>
    </recommendedName>
    <alternativeName>
        <fullName evidence="10">2' cyclic ADP-D-ribose synthase</fullName>
        <shortName evidence="10">2'cADPR synthase L6</shortName>
        <ecNumber evidence="7">3.2.2.-</ecNumber>
    </alternativeName>
    <alternativeName>
        <fullName>NAD(+) hydrolase L6</fullName>
        <ecNumber evidence="6">3.2.2.6</ecNumber>
    </alternativeName>
    <alternativeName>
        <fullName evidence="10">NADP(+) hydrolase L6</fullName>
        <ecNumber evidence="6">3.2.2.-</ecNumber>
    </alternativeName>
</protein>
<dbReference type="EC" id="3.2.2.-" evidence="7 6"/>
<dbReference type="EC" id="3.2.2.6" evidence="6"/>
<dbReference type="EMBL" id="U27081">
    <property type="protein sequence ID" value="AAA91022.1"/>
    <property type="molecule type" value="Genomic_DNA"/>
</dbReference>
<dbReference type="PIR" id="T18546">
    <property type="entry name" value="T18546"/>
</dbReference>
<dbReference type="PDB" id="3OZI">
    <property type="method" value="X-ray"/>
    <property type="resolution" value="2.30 A"/>
    <property type="chains" value="A/B=29-229"/>
</dbReference>
<dbReference type="PDBsum" id="3OZI"/>
<dbReference type="EMDB" id="EMD-32121"/>
<dbReference type="EMDB" id="EMD-32126"/>
<dbReference type="SMR" id="Q40253"/>
<dbReference type="KEGG" id="ag:AAA91022"/>
<dbReference type="GO" id="GO:0043531">
    <property type="term" value="F:ADP binding"/>
    <property type="evidence" value="ECO:0007669"/>
    <property type="project" value="InterPro"/>
</dbReference>
<dbReference type="GO" id="GO:0003953">
    <property type="term" value="F:NAD+ nucleosidase activity"/>
    <property type="evidence" value="ECO:0000314"/>
    <property type="project" value="UniProtKB"/>
</dbReference>
<dbReference type="GO" id="GO:0061809">
    <property type="term" value="F:NAD+ nucleosidase activity, cyclic ADP-ribose generating"/>
    <property type="evidence" value="ECO:0007669"/>
    <property type="project" value="UniProtKB-EC"/>
</dbReference>
<dbReference type="GO" id="GO:0050135">
    <property type="term" value="F:NADP+ nucleosidase activity"/>
    <property type="evidence" value="ECO:0000314"/>
    <property type="project" value="UniProtKB"/>
</dbReference>
<dbReference type="GO" id="GO:0006952">
    <property type="term" value="P:defense response"/>
    <property type="evidence" value="ECO:0007669"/>
    <property type="project" value="UniProtKB-KW"/>
</dbReference>
<dbReference type="GO" id="GO:0019677">
    <property type="term" value="P:NAD catabolic process"/>
    <property type="evidence" value="ECO:0000314"/>
    <property type="project" value="UniProtKB"/>
</dbReference>
<dbReference type="GO" id="GO:0043068">
    <property type="term" value="P:positive regulation of programmed cell death"/>
    <property type="evidence" value="ECO:0000314"/>
    <property type="project" value="UniProtKB"/>
</dbReference>
<dbReference type="GO" id="GO:0007165">
    <property type="term" value="P:signal transduction"/>
    <property type="evidence" value="ECO:0007669"/>
    <property type="project" value="InterPro"/>
</dbReference>
<dbReference type="FunFam" id="3.40.50.10140:FF:000007">
    <property type="entry name" value="Disease resistance protein (TIR-NBS-LRR class)"/>
    <property type="match status" value="1"/>
</dbReference>
<dbReference type="Gene3D" id="1.10.8.430">
    <property type="entry name" value="Helical domain of apoptotic protease-activating factors"/>
    <property type="match status" value="1"/>
</dbReference>
<dbReference type="Gene3D" id="3.40.50.300">
    <property type="entry name" value="P-loop containing nucleotide triphosphate hydrolases"/>
    <property type="match status" value="1"/>
</dbReference>
<dbReference type="Gene3D" id="3.80.10.10">
    <property type="entry name" value="Ribonuclease Inhibitor"/>
    <property type="match status" value="3"/>
</dbReference>
<dbReference type="Gene3D" id="3.40.50.10140">
    <property type="entry name" value="Toll/interleukin-1 receptor homology (TIR) domain"/>
    <property type="match status" value="1"/>
</dbReference>
<dbReference type="InterPro" id="IPR042197">
    <property type="entry name" value="Apaf_helical"/>
</dbReference>
<dbReference type="InterPro" id="IPR044974">
    <property type="entry name" value="Disease_R_plants"/>
</dbReference>
<dbReference type="InterPro" id="IPR032675">
    <property type="entry name" value="LRR_dom_sf"/>
</dbReference>
<dbReference type="InterPro" id="IPR002182">
    <property type="entry name" value="NB-ARC"/>
</dbReference>
<dbReference type="InterPro" id="IPR027417">
    <property type="entry name" value="P-loop_NTPase"/>
</dbReference>
<dbReference type="InterPro" id="IPR000157">
    <property type="entry name" value="TIR_dom"/>
</dbReference>
<dbReference type="InterPro" id="IPR035897">
    <property type="entry name" value="Toll_tir_struct_dom_sf"/>
</dbReference>
<dbReference type="PANTHER" id="PTHR11017:SF570">
    <property type="entry name" value="DISEASE RESISTANCE PROTEIN (TIR-NBS CLASS)-RELATED"/>
    <property type="match status" value="1"/>
</dbReference>
<dbReference type="PANTHER" id="PTHR11017">
    <property type="entry name" value="LEUCINE-RICH REPEAT-CONTAINING PROTEIN"/>
    <property type="match status" value="1"/>
</dbReference>
<dbReference type="Pfam" id="PF00931">
    <property type="entry name" value="NB-ARC"/>
    <property type="match status" value="1"/>
</dbReference>
<dbReference type="Pfam" id="PF01582">
    <property type="entry name" value="TIR"/>
    <property type="match status" value="1"/>
</dbReference>
<dbReference type="Pfam" id="PF23282">
    <property type="entry name" value="WHD_ROQ1"/>
    <property type="match status" value="1"/>
</dbReference>
<dbReference type="PRINTS" id="PR00364">
    <property type="entry name" value="DISEASERSIST"/>
</dbReference>
<dbReference type="SMART" id="SM00255">
    <property type="entry name" value="TIR"/>
    <property type="match status" value="1"/>
</dbReference>
<dbReference type="SUPFAM" id="SSF52058">
    <property type="entry name" value="L domain-like"/>
    <property type="match status" value="1"/>
</dbReference>
<dbReference type="SUPFAM" id="SSF52540">
    <property type="entry name" value="P-loop containing nucleoside triphosphate hydrolases"/>
    <property type="match status" value="1"/>
</dbReference>
<dbReference type="SUPFAM" id="SSF52047">
    <property type="entry name" value="RNI-like"/>
    <property type="match status" value="1"/>
</dbReference>
<dbReference type="SUPFAM" id="SSF52200">
    <property type="entry name" value="Toll/Interleukin receptor TIR domain"/>
    <property type="match status" value="1"/>
</dbReference>
<dbReference type="PROSITE" id="PS50104">
    <property type="entry name" value="TIR"/>
    <property type="match status" value="1"/>
</dbReference>
<keyword id="KW-0002">3D-structure</keyword>
<keyword id="KW-0378">Hydrolase</keyword>
<keyword id="KW-0433">Leucine-rich repeat</keyword>
<keyword id="KW-0520">NAD</keyword>
<keyword id="KW-0611">Plant defense</keyword>
<keyword id="KW-0677">Repeat</keyword>
<keyword id="KW-0732">Signal</keyword>
<feature type="signal peptide" evidence="2">
    <location>
        <begin position="1"/>
        <end position="29"/>
    </location>
</feature>
<feature type="chain" id="PRO_5004231414" description="Disease resistance protein L6" evidence="2">
    <location>
        <begin position="30"/>
        <end position="1294"/>
    </location>
</feature>
<feature type="domain" description="TIR" evidence="3">
    <location>
        <begin position="59"/>
        <end position="221"/>
    </location>
</feature>
<feature type="domain" description="NB-ARC" evidence="2">
    <location>
        <begin position="241"/>
        <end position="480"/>
    </location>
</feature>
<feature type="repeat" description="LRR 1" evidence="2">
    <location>
        <begin position="246"/>
        <end position="268"/>
    </location>
</feature>
<feature type="repeat" description="LRR 2" evidence="2">
    <location>
        <begin position="468"/>
        <end position="492"/>
    </location>
</feature>
<feature type="repeat" description="LRR 3" evidence="2">
    <location>
        <begin position="604"/>
        <end position="625"/>
    </location>
</feature>
<feature type="repeat" description="LRR 4" evidence="2">
    <location>
        <begin position="626"/>
        <end position="650"/>
    </location>
</feature>
<feature type="repeat" description="LRR 5" evidence="2">
    <location>
        <begin position="904"/>
        <end position="928"/>
    </location>
</feature>
<feature type="repeat" description="LRR 6" evidence="2">
    <location>
        <begin position="1012"/>
        <end position="1039"/>
    </location>
</feature>
<feature type="repeat" description="LRR 7" evidence="2">
    <location>
        <begin position="1063"/>
        <end position="1085"/>
    </location>
</feature>
<feature type="repeat" description="LRR 8" evidence="2">
    <location>
        <begin position="1086"/>
        <end position="1109"/>
    </location>
</feature>
<feature type="repeat" description="LRR 9" evidence="2">
    <location>
        <begin position="1179"/>
        <end position="1203"/>
    </location>
</feature>
<feature type="repeat" description="LRR 10" evidence="2">
    <location>
        <begin position="1205"/>
        <end position="1229"/>
    </location>
</feature>
<feature type="repeat" description="LRR 11" evidence="2">
    <location>
        <begin position="1254"/>
        <end position="1278"/>
    </location>
</feature>
<feature type="region of interest" description="Disordered" evidence="4">
    <location>
        <begin position="34"/>
        <end position="54"/>
    </location>
</feature>
<feature type="active site" evidence="3 11">
    <location>
        <position position="135"/>
    </location>
</feature>
<feature type="binding site" evidence="1">
    <location>
        <begin position="68"/>
        <end position="73"/>
    </location>
    <ligand>
        <name>NAD(+)</name>
        <dbReference type="ChEBI" id="CHEBI:57540"/>
    </ligand>
</feature>
<feature type="binding site" evidence="1">
    <location>
        <position position="101"/>
    </location>
    <ligand>
        <name>NAD(+)</name>
        <dbReference type="ChEBI" id="CHEBI:57540"/>
    </ligand>
</feature>
<feature type="site" description="Important for ADPR cyclization" evidence="12">
    <location>
        <position position="131"/>
    </location>
</feature>
<feature type="mutagenesis site" description="Abolished ability to promote cell death without affecting homooligomerization." evidence="5">
    <original>R</original>
    <variation>A</variation>
    <location>
        <position position="73"/>
    </location>
</feature>
<feature type="mutagenesis site" description="Slightly reduced ability to promote cell death without affecting homooligomerization." evidence="5">
    <original>K</original>
    <variation>A</variation>
    <location>
        <position position="100"/>
    </location>
</feature>
<feature type="mutagenesis site" description="Abolished ability to promote cell death without affecting homooligomerization." evidence="5">
    <original>G</original>
    <variation>C</variation>
    <location>
        <position position="101"/>
    </location>
</feature>
<feature type="mutagenesis site" description="Abolished ability to promote cell death without affecting homooligomerization." evidence="5">
    <original>I</original>
    <variation>A</variation>
    <location>
        <position position="104"/>
    </location>
</feature>
<feature type="mutagenesis site" description="Abolished ability to promote cell death without affecting homooligomerization." evidence="5">
    <original>S</original>
    <variation>A</variation>
    <location>
        <position position="129"/>
    </location>
</feature>
<feature type="mutagenesis site" description="Reduced ability to promote cell death without affecting homooligomerization." evidence="5">
    <original>K</original>
    <variation>A</variation>
    <location>
        <position position="130"/>
    </location>
</feature>
<feature type="mutagenesis site" description="Abolished ability to promote cell death without affecting homooligomerization. Loss of NAD(+) hydrolase activity." evidence="5 7">
    <original>W</original>
    <variation>A</variation>
    <location>
        <position position="131"/>
    </location>
</feature>
<feature type="mutagenesis site" description="Abolished ability to promote cell death without affecting homooligomerization." evidence="5">
    <original>C</original>
    <variation>S</variation>
    <location>
        <position position="132"/>
    </location>
</feature>
<feature type="mutagenesis site" description="Loss of NAD(+) hydrolase activity." evidence="6">
    <original>E</original>
    <variation>A</variation>
    <location>
        <position position="135"/>
    </location>
</feature>
<feature type="mutagenesis site" description="Abolished ability to promote cell death and impaired homooligomerization." evidence="5">
    <original>Y</original>
    <variation>A</variation>
    <location>
        <position position="156"/>
    </location>
</feature>
<feature type="mutagenesis site" description="Reduced ability to promote cell death without affecting homooligomerization." evidence="5">
    <original>D</original>
    <variation>A</variation>
    <location>
        <position position="159"/>
    </location>
</feature>
<feature type="mutagenesis site" description="Abolished ability to promote cell death and impaired homooligomerization." evidence="5">
    <original>P</original>
    <variation>Y</variation>
    <location>
        <position position="160"/>
    </location>
</feature>
<feature type="mutagenesis site" description="Reduced ability to promote cell death without affecting homooligomerization." evidence="5">
    <original>S</original>
    <variation>A</variation>
    <location>
        <position position="161"/>
    </location>
</feature>
<feature type="mutagenesis site" description="Reduced ability to promote cell death and impaired homooligomerization." evidence="5">
    <original>R</original>
    <variation>A</variation>
    <variation>E</variation>
    <location>
        <position position="164"/>
    </location>
</feature>
<feature type="mutagenesis site" description="Reduced ability to promote cell death without affecting homooligomerization." evidence="5">
    <original>T</original>
    <variation>A</variation>
    <location>
        <position position="185"/>
    </location>
</feature>
<feature type="mutagenesis site" description="Slightly reduced ability to promote cell death without affecting homooligomerization." evidence="5">
    <original>D</original>
    <variation>A</variation>
    <location>
        <position position="198"/>
    </location>
</feature>
<feature type="mutagenesis site" description="Reduced ability to promote cell death and impaired homooligomerization." evidence="5">
    <original>K</original>
    <variation>E</variation>
    <location>
        <position position="200"/>
    </location>
</feature>
<feature type="mutagenesis site" description="Reduced ability to promote cell death without affecting homooligomerization." evidence="5">
    <original>G</original>
    <variation>C</variation>
    <location>
        <position position="201"/>
    </location>
</feature>
<feature type="mutagenesis site" description="Abolished ability to promote cell death and impaired homooligomerization." evidence="5">
    <original>G</original>
    <variation>R</variation>
    <location>
        <position position="201"/>
    </location>
</feature>
<feature type="mutagenesis site" description="Reduced ability to promote cell death and impaired homooligomerization." evidence="5">
    <original>G</original>
    <variation>Y</variation>
    <location>
        <position position="201"/>
    </location>
</feature>
<feature type="mutagenesis site" description="Reduced ability to promote cell death and impaired homooligomerization." evidence="5">
    <original>W</original>
    <variation>A</variation>
    <location>
        <position position="202"/>
    </location>
</feature>
<feature type="mutagenesis site" description="Reduced ability to promote cell death and impaired homooligomerization." evidence="5">
    <original>D</original>
    <variation>A</variation>
    <location>
        <position position="208"/>
    </location>
</feature>
<feature type="mutagenesis site" description="Slightly reduced ability to promote cell death without affecting homooligomerization." evidence="5">
    <original>K</original>
    <variation>A</variation>
    <location>
        <position position="216"/>
    </location>
</feature>
<feature type="mutagenesis site" description="Does not affect ability to promote cell death while homooligomerization is abolished." evidence="5">
    <original>K</original>
    <variation>E</variation>
    <location>
        <position position="216"/>
    </location>
</feature>
<comment type="function">
    <text evidence="6 7 8">TIR-NB-LRR receptor-like protein that confers resistance to the flax rust phytopathogenic fungus (M.lini) (PubMed:7549479). An NAD(+) hydrolase (NADase): in response to activation, catalyzes cleavage of NAD(+) into ADP-D-ribose (ADPR) and nicotinamide; NAD(+) cleavage triggering a defense system that promotes cell death (PubMed:31439792). Also able to hydrolyze NADP(+), but not other NAD(+)-related molecules (PubMed:31439792). Makes small amounts of 2' cyclic ADPR (2'cADPR) (PubMed:36048923).</text>
</comment>
<comment type="catalytic activity">
    <reaction evidence="6">
        <text>NAD(+) + H2O = ADP-D-ribose + nicotinamide + H(+)</text>
        <dbReference type="Rhea" id="RHEA:16301"/>
        <dbReference type="ChEBI" id="CHEBI:15377"/>
        <dbReference type="ChEBI" id="CHEBI:15378"/>
        <dbReference type="ChEBI" id="CHEBI:17154"/>
        <dbReference type="ChEBI" id="CHEBI:57540"/>
        <dbReference type="ChEBI" id="CHEBI:57967"/>
        <dbReference type="EC" id="3.2.2.6"/>
    </reaction>
    <physiologicalReaction direction="left-to-right" evidence="6">
        <dbReference type="Rhea" id="RHEA:16302"/>
    </physiologicalReaction>
</comment>
<comment type="catalytic activity">
    <reaction evidence="6">
        <text>NADP(+) + H2O = ADP-D-ribose 2'-phosphate + nicotinamide + H(+)</text>
        <dbReference type="Rhea" id="RHEA:19849"/>
        <dbReference type="ChEBI" id="CHEBI:15377"/>
        <dbReference type="ChEBI" id="CHEBI:15378"/>
        <dbReference type="ChEBI" id="CHEBI:17154"/>
        <dbReference type="ChEBI" id="CHEBI:58349"/>
        <dbReference type="ChEBI" id="CHEBI:58673"/>
    </reaction>
    <physiologicalReaction direction="left-to-right" evidence="6">
        <dbReference type="Rhea" id="RHEA:19850"/>
    </physiologicalReaction>
</comment>
<comment type="catalytic activity">
    <reaction evidence="7">
        <text>NAD(+) = 2'cADPR + nicotinamide + H(+)</text>
        <dbReference type="Rhea" id="RHEA:75299"/>
        <dbReference type="ChEBI" id="CHEBI:15378"/>
        <dbReference type="ChEBI" id="CHEBI:17154"/>
        <dbReference type="ChEBI" id="CHEBI:57540"/>
        <dbReference type="ChEBI" id="CHEBI:194248"/>
    </reaction>
    <physiologicalReaction direction="left-to-right" evidence="7">
        <dbReference type="Rhea" id="RHEA:75300"/>
    </physiologicalReaction>
</comment>
<comment type="subunit">
    <text evidence="5">Homooligomer; homooligomerization is required for activity.</text>
</comment>
<comment type="domain">
    <text evidence="3 7">The TIR domain mediates NAD(+) hydrolase (NADase) activity. Self-association of TIR domains is required for NADase activity. The TIR domain alone is active and (slowly) produces 2'cADPR (PubMed:36048923).</text>
</comment>
<comment type="similarity">
    <text evidence="10">Belongs to the disease resistance TIR-NB-LRR family.</text>
</comment>
<reference key="1">
    <citation type="journal article" date="1995" name="Plant Cell">
        <title>The L6 gene for flax rust resistance is related to the Arabidopsis bacterial resistance gene RPS2 and the tobacco viral resistance gene N.</title>
        <authorList>
            <person name="Lawrence G.J."/>
            <person name="Finnegan E.J."/>
            <person name="Ayliffe M.A."/>
            <person name="Ellis J.G."/>
        </authorList>
    </citation>
    <scope>NUCLEOTIDE SEQUENCE [GENOMIC DNA]</scope>
    <scope>FUNCTION</scope>
</reference>
<reference key="2">
    <citation type="journal article" date="2019" name="Science">
        <title>NAD+ cleavage activity by animal and plant TIR domains in cell death pathways.</title>
        <authorList>
            <person name="Horsefield S."/>
            <person name="Burdett H."/>
            <person name="Zhang X."/>
            <person name="Manik M.K."/>
            <person name="Shi Y."/>
            <person name="Chen J."/>
            <person name="Qi T."/>
            <person name="Gilley J."/>
            <person name="Lai J.S."/>
            <person name="Rank M.X."/>
            <person name="Casey L.W."/>
            <person name="Gu W."/>
            <person name="Ericsson D.J."/>
            <person name="Foley G."/>
            <person name="Hughes R.O."/>
            <person name="Bosanac T."/>
            <person name="von Itzstein M."/>
            <person name="Rathjen J.P."/>
            <person name="Nanson J.D."/>
            <person name="Boden M."/>
            <person name="Dry I.B."/>
            <person name="Williams S.J."/>
            <person name="Staskawicz B.J."/>
            <person name="Coleman M.P."/>
            <person name="Ve T."/>
            <person name="Dodds P.N."/>
            <person name="Kobe B."/>
        </authorList>
    </citation>
    <scope>FUNCTION</scope>
    <scope>CATALYTIC ACTIVITY</scope>
    <scope>ACTIVE SITE</scope>
    <scope>MUTAGENESIS OF GLU-135</scope>
</reference>
<reference key="3">
    <citation type="journal article" date="2022" name="Science">
        <title>Cyclic ADP ribose isomers: Production, chemical structures, and immune signaling.</title>
        <authorList>
            <person name="Manik M.K."/>
            <person name="Shi Y."/>
            <person name="Li S."/>
            <person name="Zaydman M.A."/>
            <person name="Damaraju N."/>
            <person name="Eastman S."/>
            <person name="Smith T.G."/>
            <person name="Gu W."/>
            <person name="Masic V."/>
            <person name="Mosaiab T."/>
            <person name="Weagley J.S."/>
            <person name="Hancock S.J."/>
            <person name="Vasquez E."/>
            <person name="Hartley-Tassell L."/>
            <person name="Kargios N."/>
            <person name="Maruta N."/>
            <person name="Lim B.Y.J."/>
            <person name="Burdett H."/>
            <person name="Landsberg M.J."/>
            <person name="Schembri M.A."/>
            <person name="Prokes I."/>
            <person name="Song L."/>
            <person name="Grant M."/>
            <person name="DiAntonio A."/>
            <person name="Nanson J.D."/>
            <person name="Guo M."/>
            <person name="Milbrandt J."/>
            <person name="Ve T."/>
            <person name="Kobe B."/>
        </authorList>
    </citation>
    <scope>FUNCTION</scope>
    <scope>CATALYTIC ACTIVITY</scope>
    <scope>DOMAIN</scope>
    <scope>MUTAGENESIS OF TRP-131</scope>
</reference>
<reference evidence="13" key="4">
    <citation type="journal article" date="2011" name="Cell Host Microbe">
        <title>Structural and functional analysis of a plant resistance protein TIR domain reveals interfaces for self-association, signaling, and autoregulation.</title>
        <authorList>
            <person name="Bernoux M."/>
            <person name="Ve T."/>
            <person name="Williams S."/>
            <person name="Warren C."/>
            <person name="Hatters D."/>
            <person name="Valkov E."/>
            <person name="Zhang X."/>
            <person name="Ellis J.G."/>
            <person name="Kobe B."/>
            <person name="Dodds P.N."/>
        </authorList>
    </citation>
    <scope>X-RAY CRYSTALLOGRAPHY (2.30 ANGSTROMS) OF 29-229</scope>
    <scope>SUBUNIT</scope>
    <scope>MUTAGENESIS OF ARG-73; LYS-100; GLY-101; ILE-104; SER-129; LYS-130; TRP-131; CYS-132; TYR-156; ASP-159; PRO-160; SER-161; ARG-164; THR-185; ASP-198; LYS-200; GLY-201; TRP-202; ASP-208 AND LYS-216</scope>
</reference>
<sequence>MSYLREVATAVALLLPFILLNKFWRPNSKDSIVNDDDDSTSEVDAISDSTNPSGSFPSVEYEVFLSFRGPDTREQFTDFLYQSLRRYKIHTFRDDDELLKGKEIGPNLLRAIDQSKIYVPIISSGYADSKWCLMELAEIVRRQEEDPRRIILPIFYMVDPSDVRHQTGCYKKAFRKHANKFDGQTIQNWKDALKKVGDLKGWHIGKNDKQGAIADKVSADIWSHISKENLILETDELVGIDDHITAVLEKLSLDSENVTMVGLYGMGGIGKTTTAKAVYNKISSCFDCCCFIDNIRETQEKDGVVVLQKKLVSEILRIDSGSVGFNNDSGGRKTIKERVSRFKILVVLDDVDEKFKFEDMLGSPKDFISQSRFIITSRSMRVLGTLNENQCKLYEVGSMSKPRSLELFSKHAFKKNTPPSYYETLANDVVDTTAGLPLTLKVIGSLLFKQEIAVWEDTLEQLRRTLNLDEVYDRLKISYDALNPEAKEIFLDIACFFIGQNKEEPYYMWTDCNFYPASNIIFLIQRCMIQVGDDDEFKMHDQLRDMGREIVRREDVLPWKRSRIWSAEEGIDLLLNKKGSSKVKAISIPWGVKYEFKSECFLNLSELRYLHAREAMLTGDFNNLLPNLKWLELPFYKHGEDDPPLTNYTMKNLIIVILEHSHITADDWGGWRHMMKMAERLKVVRLASNYSLYGRRVRLSDCWRFPKSIEVLSMTAIEMDEVDIGELKKLKTLVLKFCPIQKISGGTFGMLKGLRELCLEFNWGTNLREVVADIGQLSSLKVLKTTGAKEVEINEFPLGLKELSTSSRIPNLSQLLDLEVLKVYDCKDGFDMPPASPSEDESSVWWKVSKLKSLQLEKTRINVNVVDDASSGGHLPRYLLPTSLTYLKIYQCTEPTWLPGIENLENLTSLEVNDIFQTLGGDLDGLQGLRSLEILRIRKVNGLARIKGLKDLLCSSTCKLRKFYITECPDLIELLPCELGGQTVVVPSMAELTIRDCPRLEVGPMIRSLPKFPMLKKLDLAVANITKEEDLDAIGSLEELVSLELELDDTSSGIERIVSSSKLQKLTTLVVKVPSLREIEGLEELKSLQDLYLEGCTSLGRLPLEKLKELDIGGCPDLTELVQTVVAVPSLRGLTIRDCPRLEVGPMIQSLPKFPMLNELTLSMVNITKEDELEVLGSLEELDSLELTLDDTCSSIERISFLSKLQKLTTLIVEVPSLREIEGLAELKSLRILYLEGCTSLERLWPDQQQLGSLKNLNVLDIQGCKSLSVDHLSALKTTLPPRARITWPDQPYR</sequence>